<sequence length="89" mass="9504">MNLPTVLCIIALILGVRSAKNGFFTKLGKPIVCDDINFVGNYCQTKCVKAGANNGFCCQQKCYCLGLNDYAPTLQVADSSEKACQAMSG</sequence>
<feature type="signal peptide" evidence="2">
    <location>
        <begin position="1"/>
        <end position="18"/>
    </location>
</feature>
<feature type="chain" id="PRO_0000403825" description="Neurotoxin LmNaTx28">
    <location>
        <begin position="19"/>
        <end position="89"/>
    </location>
</feature>
<feature type="domain" description="LCN-type CS-alpha/beta" evidence="3">
    <location>
        <begin position="20"/>
        <end position="85"/>
    </location>
</feature>
<feature type="disulfide bond" evidence="3">
    <location>
        <begin position="33"/>
        <end position="57"/>
    </location>
</feature>
<feature type="disulfide bond" evidence="3">
    <location>
        <begin position="43"/>
        <end position="62"/>
    </location>
</feature>
<feature type="disulfide bond" evidence="3">
    <location>
        <begin position="47"/>
        <end position="64"/>
    </location>
</feature>
<feature type="disulfide bond" evidence="3">
    <location>
        <begin position="58"/>
        <end position="84"/>
    </location>
</feature>
<reference key="1">
    <citation type="journal article" date="2010" name="BMC Genomics">
        <title>Comparative venom gland transcriptome analysis of the scorpion Lychas mucronatus reveals intraspecific toxic gene diversity and new venomous components.</title>
        <authorList>
            <person name="Zhao R."/>
            <person name="Ma Y."/>
            <person name="He Y."/>
            <person name="Di Z."/>
            <person name="Wu Y.-L."/>
            <person name="Cao Z.-J."/>
            <person name="Li W.-X."/>
        </authorList>
    </citation>
    <scope>NUCLEOTIDE SEQUENCE [MRNA]</scope>
    <source>
        <strain>Hainan</strain>
        <tissue>Venom gland</tissue>
    </source>
</reference>
<accession>D9U2A5</accession>
<evidence type="ECO:0000250" key="1"/>
<evidence type="ECO:0000255" key="2"/>
<evidence type="ECO:0000255" key="3">
    <source>
        <dbReference type="PROSITE-ProRule" id="PRU01210"/>
    </source>
</evidence>
<evidence type="ECO:0000305" key="4"/>
<name>SNA28_LYCMC</name>
<comment type="function">
    <text evidence="1">Binds voltage-independently at site-4 of sodium channels (Nav) and shift the voltage of activation toward more negative potentials thereby affecting sodium channel activation and promoting spontaneous and repetitive firing.</text>
</comment>
<comment type="subcellular location">
    <subcellularLocation>
        <location evidence="1">Secreted</location>
    </subcellularLocation>
</comment>
<comment type="tissue specificity">
    <text>Expressed by the venom gland.</text>
</comment>
<comment type="domain">
    <text evidence="4">Has the structural arrangement of an alpha-helix connected to antiparallel beta-sheets by disulfide bonds (CS-alpha/beta).</text>
</comment>
<comment type="similarity">
    <text evidence="4">Belongs to the long (4 C-C) scorpion toxin superfamily. Sodium channel inhibitor family. Beta subfamily.</text>
</comment>
<protein>
    <recommendedName>
        <fullName>Neurotoxin LmNaTx28</fullName>
    </recommendedName>
</protein>
<proteinExistence type="evidence at transcript level"/>
<dbReference type="EMBL" id="EU159303">
    <property type="protein sequence ID" value="ABX76776.1"/>
    <property type="molecule type" value="mRNA"/>
</dbReference>
<dbReference type="SMR" id="D9U2A5"/>
<dbReference type="GO" id="GO:0005576">
    <property type="term" value="C:extracellular region"/>
    <property type="evidence" value="ECO:0007669"/>
    <property type="project" value="UniProtKB-SubCell"/>
</dbReference>
<dbReference type="GO" id="GO:0008200">
    <property type="term" value="F:ion channel inhibitor activity"/>
    <property type="evidence" value="ECO:0007669"/>
    <property type="project" value="InterPro"/>
</dbReference>
<dbReference type="GO" id="GO:0017080">
    <property type="term" value="F:sodium channel regulator activity"/>
    <property type="evidence" value="ECO:0007669"/>
    <property type="project" value="UniProtKB-KW"/>
</dbReference>
<dbReference type="GO" id="GO:0090729">
    <property type="term" value="F:toxin activity"/>
    <property type="evidence" value="ECO:0007669"/>
    <property type="project" value="UniProtKB-KW"/>
</dbReference>
<dbReference type="Gene3D" id="3.30.30.10">
    <property type="entry name" value="Knottin, scorpion toxin-like"/>
    <property type="match status" value="1"/>
</dbReference>
<dbReference type="InterPro" id="IPR044062">
    <property type="entry name" value="LCN-type_CS_alpha_beta_dom"/>
</dbReference>
<dbReference type="InterPro" id="IPR036574">
    <property type="entry name" value="Scorpion_toxin-like_sf"/>
</dbReference>
<dbReference type="SUPFAM" id="SSF57095">
    <property type="entry name" value="Scorpion toxin-like"/>
    <property type="match status" value="1"/>
</dbReference>
<dbReference type="PROSITE" id="PS51863">
    <property type="entry name" value="LCN_CSAB"/>
    <property type="match status" value="1"/>
</dbReference>
<keyword id="KW-1015">Disulfide bond</keyword>
<keyword id="KW-0872">Ion channel impairing toxin</keyword>
<keyword id="KW-0528">Neurotoxin</keyword>
<keyword id="KW-0964">Secreted</keyword>
<keyword id="KW-0732">Signal</keyword>
<keyword id="KW-0800">Toxin</keyword>
<keyword id="KW-0738">Voltage-gated sodium channel impairing toxin</keyword>
<organism>
    <name type="scientific">Lychas mucronatus</name>
    <name type="common">Chinese swimming scorpion</name>
    <dbReference type="NCBI Taxonomy" id="172552"/>
    <lineage>
        <taxon>Eukaryota</taxon>
        <taxon>Metazoa</taxon>
        <taxon>Ecdysozoa</taxon>
        <taxon>Arthropoda</taxon>
        <taxon>Chelicerata</taxon>
        <taxon>Arachnida</taxon>
        <taxon>Scorpiones</taxon>
        <taxon>Buthida</taxon>
        <taxon>Buthoidea</taxon>
        <taxon>Buthidae</taxon>
        <taxon>Lychas</taxon>
    </lineage>
</organism>